<keyword id="KW-0175">Coiled coil</keyword>
<keyword id="KW-1185">Reference proteome</keyword>
<feature type="chain" id="PRO_0000216329" description="Uncharacterized protein PM1771">
    <location>
        <begin position="1"/>
        <end position="380"/>
    </location>
</feature>
<feature type="coiled-coil region" evidence="1">
    <location>
        <begin position="256"/>
        <end position="301"/>
    </location>
</feature>
<organism>
    <name type="scientific">Pasteurella multocida (strain Pm70)</name>
    <dbReference type="NCBI Taxonomy" id="272843"/>
    <lineage>
        <taxon>Bacteria</taxon>
        <taxon>Pseudomonadati</taxon>
        <taxon>Pseudomonadota</taxon>
        <taxon>Gammaproteobacteria</taxon>
        <taxon>Pasteurellales</taxon>
        <taxon>Pasteurellaceae</taxon>
        <taxon>Pasteurella</taxon>
    </lineage>
</organism>
<evidence type="ECO:0000255" key="1"/>
<protein>
    <recommendedName>
        <fullName>Uncharacterized protein PM1771</fullName>
    </recommendedName>
</protein>
<reference key="1">
    <citation type="journal article" date="2001" name="Proc. Natl. Acad. Sci. U.S.A.">
        <title>Complete genomic sequence of Pasteurella multocida Pm70.</title>
        <authorList>
            <person name="May B.J."/>
            <person name="Zhang Q."/>
            <person name="Li L.L."/>
            <person name="Paustian M.L."/>
            <person name="Whittam T.S."/>
            <person name="Kapur V."/>
        </authorList>
    </citation>
    <scope>NUCLEOTIDE SEQUENCE [LARGE SCALE GENOMIC DNA]</scope>
    <source>
        <strain>Pm70</strain>
    </source>
</reference>
<accession>Q9CK63</accession>
<gene>
    <name type="ordered locus">PM1771</name>
</gene>
<sequence>MMENQEFLSLDEAVLLSNKFNLNFSKEDILYLSSLDHFKAYNNIQYVYMGDVQKPVYKIHGLKGFFKTRLETKSRLLLQELDIIRTNDSYVIDKKKEQGFSRDIWTIKERNNLKSVLYLHLSNRYDDLYFIDYGFASVTLPIYEERVKKHDIVKGMVESTMLSNIAIRNKPQNAKLFVSFLSKSLTNHYVPNSSFDIFEFNIAGIIDYPFSLEPYILSYKEKEDDDLLELYNEYNFDEIFYFKHTDLLEYFQKIIDKEEKIQKSYQYQTELITELQGRIAELEKENQSLKENVKEPETSKPIRPDEKETLLKLIYALAMGRTDKDFSASAYFNKKGVLKVSTMINEIVADLEQVGIMNFSDGTLRKRLSEILQMGELKAD</sequence>
<proteinExistence type="predicted"/>
<dbReference type="EMBL" id="AE004439">
    <property type="protein sequence ID" value="AAK03855.1"/>
    <property type="molecule type" value="Genomic_DNA"/>
</dbReference>
<dbReference type="RefSeq" id="WP_010907325.1">
    <property type="nucleotide sequence ID" value="NC_002663.1"/>
</dbReference>
<dbReference type="SMR" id="Q9CK63"/>
<dbReference type="STRING" id="272843.PM1771"/>
<dbReference type="EnsemblBacteria" id="AAK03855">
    <property type="protein sequence ID" value="AAK03855"/>
    <property type="gene ID" value="PM1771"/>
</dbReference>
<dbReference type="KEGG" id="pmu:PM1771"/>
<dbReference type="PATRIC" id="fig|272843.6.peg.1794"/>
<dbReference type="HOGENOM" id="CLU_727304_0_0_6"/>
<dbReference type="Proteomes" id="UP000000809">
    <property type="component" value="Chromosome"/>
</dbReference>
<name>Y1771_PASMU</name>